<evidence type="ECO:0000250" key="1">
    <source>
        <dbReference type="UniProtKB" id="Q96LI5"/>
    </source>
</evidence>
<evidence type="ECO:0000255" key="2"/>
<evidence type="ECO:0000256" key="3">
    <source>
        <dbReference type="SAM" id="MobiDB-lite"/>
    </source>
</evidence>
<evidence type="ECO:0000269" key="4">
    <source>
    </source>
</evidence>
<evidence type="ECO:0000269" key="5">
    <source>
    </source>
</evidence>
<evidence type="ECO:0000269" key="6">
    <source>
    </source>
</evidence>
<evidence type="ECO:0000269" key="7">
    <source>
    </source>
</evidence>
<evidence type="ECO:0000269" key="8">
    <source>
    </source>
</evidence>
<evidence type="ECO:0000269" key="9">
    <source>
    </source>
</evidence>
<evidence type="ECO:0000269" key="10">
    <source>
    </source>
</evidence>
<evidence type="ECO:0000269" key="11">
    <source ref="16"/>
</evidence>
<evidence type="ECO:0000269" key="12">
    <source ref="3"/>
</evidence>
<evidence type="ECO:0000303" key="13">
    <source>
    </source>
</evidence>
<evidence type="ECO:0000305" key="14"/>
<evidence type="ECO:0007744" key="15">
    <source>
        <dbReference type="PDB" id="4Z0V"/>
    </source>
</evidence>
<evidence type="ECO:0007744" key="16">
    <source>
        <dbReference type="PDB" id="4Z2B"/>
    </source>
</evidence>
<evidence type="ECO:0007744" key="17">
    <source>
        <dbReference type="PDB" id="4ZKF"/>
    </source>
</evidence>
<evidence type="ECO:0007744" key="18">
    <source>
    </source>
</evidence>
<evidence type="ECO:0007744" key="19">
    <source>
    </source>
</evidence>
<evidence type="ECO:0007829" key="20">
    <source>
        <dbReference type="PDB" id="4Z0V"/>
    </source>
</evidence>
<evidence type="ECO:0007829" key="21">
    <source>
        <dbReference type="PDB" id="4Z2B"/>
    </source>
</evidence>
<reference key="1">
    <citation type="journal article" date="2004" name="J. Biol. Chem.">
        <title>Identification of 2'-phosphodiesterase, which plays a role in the 2-5A system regulated by interferon.</title>
        <authorList>
            <person name="Kubota K."/>
            <person name="Nakahara K."/>
            <person name="Ohtsuka T."/>
            <person name="Yoshida S."/>
            <person name="Kawaguchi J."/>
            <person name="Fujita Y."/>
            <person name="Ozeki Y."/>
            <person name="Hara A."/>
            <person name="Yoshimura C."/>
            <person name="Furukawa H."/>
            <person name="Haruyama H."/>
            <person name="Ichikawa K."/>
            <person name="Yamashita M."/>
            <person name="Matsuoka T."/>
            <person name="Iijima Y."/>
        </authorList>
    </citation>
    <scope>NUCLEOTIDE SEQUENCE [MRNA] (ISOFORM 1)</scope>
    <scope>FUNCTION</scope>
    <scope>TISSUE SPECIFICITY</scope>
</reference>
<reference key="2">
    <citation type="journal article" date="2004" name="Nat. Genet.">
        <title>Complete sequencing and characterization of 21,243 full-length human cDNAs.</title>
        <authorList>
            <person name="Ota T."/>
            <person name="Suzuki Y."/>
            <person name="Nishikawa T."/>
            <person name="Otsuki T."/>
            <person name="Sugiyama T."/>
            <person name="Irie R."/>
            <person name="Wakamatsu A."/>
            <person name="Hayashi K."/>
            <person name="Sato H."/>
            <person name="Nagai K."/>
            <person name="Kimura K."/>
            <person name="Makita H."/>
            <person name="Sekine M."/>
            <person name="Obayashi M."/>
            <person name="Nishi T."/>
            <person name="Shibahara T."/>
            <person name="Tanaka T."/>
            <person name="Ishii S."/>
            <person name="Yamamoto J."/>
            <person name="Saito K."/>
            <person name="Kawai Y."/>
            <person name="Isono Y."/>
            <person name="Nakamura Y."/>
            <person name="Nagahari K."/>
            <person name="Murakami K."/>
            <person name="Yasuda T."/>
            <person name="Iwayanagi T."/>
            <person name="Wagatsuma M."/>
            <person name="Shiratori A."/>
            <person name="Sudo H."/>
            <person name="Hosoiri T."/>
            <person name="Kaku Y."/>
            <person name="Kodaira H."/>
            <person name="Kondo H."/>
            <person name="Sugawara M."/>
            <person name="Takahashi M."/>
            <person name="Kanda K."/>
            <person name="Yokoi T."/>
            <person name="Furuya T."/>
            <person name="Kikkawa E."/>
            <person name="Omura Y."/>
            <person name="Abe K."/>
            <person name="Kamihara K."/>
            <person name="Katsuta N."/>
            <person name="Sato K."/>
            <person name="Tanikawa M."/>
            <person name="Yamazaki M."/>
            <person name="Ninomiya K."/>
            <person name="Ishibashi T."/>
            <person name="Yamashita H."/>
            <person name="Murakawa K."/>
            <person name="Fujimori K."/>
            <person name="Tanai H."/>
            <person name="Kimata M."/>
            <person name="Watanabe M."/>
            <person name="Hiraoka S."/>
            <person name="Chiba Y."/>
            <person name="Ishida S."/>
            <person name="Ono Y."/>
            <person name="Takiguchi S."/>
            <person name="Watanabe S."/>
            <person name="Yosida M."/>
            <person name="Hotuta T."/>
            <person name="Kusano J."/>
            <person name="Kanehori K."/>
            <person name="Takahashi-Fujii A."/>
            <person name="Hara H."/>
            <person name="Tanase T.-O."/>
            <person name="Nomura Y."/>
            <person name="Togiya S."/>
            <person name="Komai F."/>
            <person name="Hara R."/>
            <person name="Takeuchi K."/>
            <person name="Arita M."/>
            <person name="Imose N."/>
            <person name="Musashino K."/>
            <person name="Yuuki H."/>
            <person name="Oshima A."/>
            <person name="Sasaki N."/>
            <person name="Aotsuka S."/>
            <person name="Yoshikawa Y."/>
            <person name="Matsunawa H."/>
            <person name="Ichihara T."/>
            <person name="Shiohata N."/>
            <person name="Sano S."/>
            <person name="Moriya S."/>
            <person name="Momiyama H."/>
            <person name="Satoh N."/>
            <person name="Takami S."/>
            <person name="Terashima Y."/>
            <person name="Suzuki O."/>
            <person name="Nakagawa S."/>
            <person name="Senoh A."/>
            <person name="Mizoguchi H."/>
            <person name="Goto Y."/>
            <person name="Shimizu F."/>
            <person name="Wakebe H."/>
            <person name="Hishigaki H."/>
            <person name="Watanabe T."/>
            <person name="Sugiyama A."/>
            <person name="Takemoto M."/>
            <person name="Kawakami B."/>
            <person name="Yamazaki M."/>
            <person name="Watanabe K."/>
            <person name="Kumagai A."/>
            <person name="Itakura S."/>
            <person name="Fukuzumi Y."/>
            <person name="Fujimori Y."/>
            <person name="Komiyama M."/>
            <person name="Tashiro H."/>
            <person name="Tanigami A."/>
            <person name="Fujiwara T."/>
            <person name="Ono T."/>
            <person name="Yamada K."/>
            <person name="Fujii Y."/>
            <person name="Ozaki K."/>
            <person name="Hirao M."/>
            <person name="Ohmori Y."/>
            <person name="Kawabata A."/>
            <person name="Hikiji T."/>
            <person name="Kobatake N."/>
            <person name="Inagaki H."/>
            <person name="Ikema Y."/>
            <person name="Okamoto S."/>
            <person name="Okitani R."/>
            <person name="Kawakami T."/>
            <person name="Noguchi S."/>
            <person name="Itoh T."/>
            <person name="Shigeta K."/>
            <person name="Senba T."/>
            <person name="Matsumura K."/>
            <person name="Nakajima Y."/>
            <person name="Mizuno T."/>
            <person name="Morinaga M."/>
            <person name="Sasaki M."/>
            <person name="Togashi T."/>
            <person name="Oyama M."/>
            <person name="Hata H."/>
            <person name="Watanabe M."/>
            <person name="Komatsu T."/>
            <person name="Mizushima-Sugano J."/>
            <person name="Satoh T."/>
            <person name="Shirai Y."/>
            <person name="Takahashi Y."/>
            <person name="Nakagawa K."/>
            <person name="Okumura K."/>
            <person name="Nagase T."/>
            <person name="Nomura N."/>
            <person name="Kikuchi H."/>
            <person name="Masuho Y."/>
            <person name="Yamashita R."/>
            <person name="Nakai K."/>
            <person name="Yada T."/>
            <person name="Nakamura Y."/>
            <person name="Ohara O."/>
            <person name="Isogai T."/>
            <person name="Sugano S."/>
        </authorList>
    </citation>
    <scope>NUCLEOTIDE SEQUENCE [LARGE SCALE MRNA] (ISOFORMS 1 AND 2)</scope>
    <scope>VARIANT TRP-23</scope>
    <source>
        <tissue>Placenta</tissue>
    </source>
</reference>
<reference key="3">
    <citation type="submission" date="2005-07" db="EMBL/GenBank/DDBJ databases">
        <authorList>
            <person name="Mural R.J."/>
            <person name="Istrail S."/>
            <person name="Sutton G.G."/>
            <person name="Florea L."/>
            <person name="Halpern A.L."/>
            <person name="Mobarry C.M."/>
            <person name="Lippert R."/>
            <person name="Walenz B."/>
            <person name="Shatkay H."/>
            <person name="Dew I."/>
            <person name="Miller J.R."/>
            <person name="Flanigan M.J."/>
            <person name="Edwards N.J."/>
            <person name="Bolanos R."/>
            <person name="Fasulo D."/>
            <person name="Halldorsson B.V."/>
            <person name="Hannenhalli S."/>
            <person name="Turner R."/>
            <person name="Yooseph S."/>
            <person name="Lu F."/>
            <person name="Nusskern D.R."/>
            <person name="Shue B.C."/>
            <person name="Zheng X.H."/>
            <person name="Zhong F."/>
            <person name="Delcher A.L."/>
            <person name="Huson D.H."/>
            <person name="Kravitz S.A."/>
            <person name="Mouchard L."/>
            <person name="Reinert K."/>
            <person name="Remington K.A."/>
            <person name="Clark A.G."/>
            <person name="Waterman M.S."/>
            <person name="Eichler E.E."/>
            <person name="Adams M.D."/>
            <person name="Hunkapiller M.W."/>
            <person name="Myers E.W."/>
            <person name="Venter J.C."/>
        </authorList>
    </citation>
    <scope>NUCLEOTIDE SEQUENCE [LARGE SCALE GENOMIC DNA]</scope>
    <scope>VARIANT TRP-23</scope>
</reference>
<reference key="4">
    <citation type="journal article" date="2007" name="BMC Genomics">
        <title>The full-ORF clone resource of the German cDNA consortium.</title>
        <authorList>
            <person name="Bechtel S."/>
            <person name="Rosenfelder H."/>
            <person name="Duda A."/>
            <person name="Schmidt C.P."/>
            <person name="Ernst U."/>
            <person name="Wellenreuther R."/>
            <person name="Mehrle A."/>
            <person name="Schuster C."/>
            <person name="Bahr A."/>
            <person name="Bloecker H."/>
            <person name="Heubner D."/>
            <person name="Hoerlein A."/>
            <person name="Michel G."/>
            <person name="Wedler H."/>
            <person name="Koehrer K."/>
            <person name="Ottenwaelder B."/>
            <person name="Poustka A."/>
            <person name="Wiemann S."/>
            <person name="Schupp I."/>
        </authorList>
    </citation>
    <scope>NUCLEOTIDE SEQUENCE [LARGE SCALE MRNA] OF 122-609 (ISOFORM 1)</scope>
    <source>
        <tissue>Lymph node</tissue>
    </source>
</reference>
<reference key="5">
    <citation type="journal article" date="2008" name="Proc. Natl. Acad. Sci. U.S.A.">
        <title>A quantitative atlas of mitotic phosphorylation.</title>
        <authorList>
            <person name="Dephoure N."/>
            <person name="Zhou C."/>
            <person name="Villen J."/>
            <person name="Beausoleil S.A."/>
            <person name="Bakalarski C.E."/>
            <person name="Elledge S.J."/>
            <person name="Gygi S.P."/>
        </authorList>
    </citation>
    <scope>IDENTIFICATION BY MASS SPECTROMETRY [LARGE SCALE ANALYSIS]</scope>
    <source>
        <tissue>Cervix carcinoma</tissue>
    </source>
</reference>
<reference key="6">
    <citation type="journal article" date="2009" name="Sci. Signal.">
        <title>Quantitative phosphoproteomic analysis of T cell receptor signaling reveals system-wide modulation of protein-protein interactions.</title>
        <authorList>
            <person name="Mayya V."/>
            <person name="Lundgren D.H."/>
            <person name="Hwang S.-I."/>
            <person name="Rezaul K."/>
            <person name="Wu L."/>
            <person name="Eng J.K."/>
            <person name="Rodionov V."/>
            <person name="Han D.K."/>
        </authorList>
    </citation>
    <scope>IDENTIFICATION BY MASS SPECTROMETRY [LARGE SCALE ANALYSIS]</scope>
    <source>
        <tissue>Leukemic T-cell</tissue>
    </source>
</reference>
<reference key="7">
    <citation type="journal article" date="2010" name="Sci. Signal.">
        <title>Quantitative phosphoproteomics reveals widespread full phosphorylation site occupancy during mitosis.</title>
        <authorList>
            <person name="Olsen J.V."/>
            <person name="Vermeulen M."/>
            <person name="Santamaria A."/>
            <person name="Kumar C."/>
            <person name="Miller M.L."/>
            <person name="Jensen L.J."/>
            <person name="Gnad F."/>
            <person name="Cox J."/>
            <person name="Jensen T.S."/>
            <person name="Nigg E.A."/>
            <person name="Brunak S."/>
            <person name="Mann M."/>
        </authorList>
    </citation>
    <scope>PHOSPHORYLATION [LARGE SCALE ANALYSIS] AT SER-217</scope>
    <scope>IDENTIFICATION BY MASS SPECTROMETRY [LARGE SCALE ANALYSIS]</scope>
    <source>
        <tissue>Cervix carcinoma</tissue>
    </source>
</reference>
<reference key="8">
    <citation type="journal article" date="2011" name="BMC Syst. Biol.">
        <title>Initial characterization of the human central proteome.</title>
        <authorList>
            <person name="Burkard T.R."/>
            <person name="Planyavsky M."/>
            <person name="Kaupe I."/>
            <person name="Breitwieser F.P."/>
            <person name="Buerckstuemmer T."/>
            <person name="Bennett K.L."/>
            <person name="Superti-Furga G."/>
            <person name="Colinge J."/>
        </authorList>
    </citation>
    <scope>IDENTIFICATION BY MASS SPECTROMETRY [LARGE SCALE ANALYSIS]</scope>
</reference>
<reference key="9">
    <citation type="journal article" date="2011" name="Nucleic Acids Res.">
        <title>Human 2'-phosphodiesterase localizes to the mitochondrial matrix with a putative function in mitochondrial RNA turnover.</title>
        <authorList>
            <person name="Poulsen J.B."/>
            <person name="Andersen K.R."/>
            <person name="Kjaer K.H."/>
            <person name="Durand F."/>
            <person name="Faou P."/>
            <person name="Vestergaard A.L."/>
            <person name="Talbo G.H."/>
            <person name="Hoogenraad N."/>
            <person name="Brodersen D.E."/>
            <person name="Justesen J."/>
            <person name="Martensen P.M."/>
        </authorList>
    </citation>
    <scope>FUNCTION</scope>
    <scope>CATALYTIC ACTIVITY</scope>
    <scope>SUBCELLULAR LOCATION</scope>
</reference>
<reference key="10">
    <citation type="journal article" date="2011" name="Nucleic Acids Res.">
        <title>PDE12 removes mitochondrial RNA poly(A) tails and controls translation in human mitochondria.</title>
        <authorList>
            <person name="Rorbach J."/>
            <person name="Nicholls T.J."/>
            <person name="Minczuk M."/>
        </authorList>
    </citation>
    <scope>FUNCTION</scope>
    <scope>CATALYTIC ACTIVITY</scope>
    <scope>SUBCELLULAR LOCATION</scope>
</reference>
<reference key="11">
    <citation type="journal article" date="2012" name="Biochimie">
        <title>Characterization of human phosphodiesterase 12 and identification of a novel 2'-5' oligoadenylate nuclease - The ectonucleotide pyrophosphatase/phosphodiesterase 1.</title>
        <authorList>
            <person name="Poulsen J.B."/>
            <person name="Andersen K.R."/>
            <person name="Kjaer K.H."/>
            <person name="Vestergaard A.L."/>
            <person name="Justesen J."/>
            <person name="Martensen P.M."/>
        </authorList>
    </citation>
    <scope>FUNCTION</scope>
    <scope>BIOPHYSICOCHEMICAL PROPERTIES</scope>
    <scope>COFACTOR</scope>
    <scope>CATALYTIC ACTIVITY</scope>
    <scope>SUBCELLULAR LOCATION</scope>
</reference>
<reference key="12">
    <citation type="journal article" date="2013" name="J. Proteome Res.">
        <title>Toward a comprehensive characterization of a human cancer cell phosphoproteome.</title>
        <authorList>
            <person name="Zhou H."/>
            <person name="Di Palma S."/>
            <person name="Preisinger C."/>
            <person name="Peng M."/>
            <person name="Polat A.N."/>
            <person name="Heck A.J."/>
            <person name="Mohammed S."/>
        </authorList>
    </citation>
    <scope>PHOSPHORYLATION [LARGE SCALE ANALYSIS] AT SER-217</scope>
    <scope>IDENTIFICATION BY MASS SPECTROMETRY [LARGE SCALE ANALYSIS]</scope>
    <source>
        <tissue>Cervix carcinoma</tissue>
        <tissue>Erythroleukemia</tissue>
    </source>
</reference>
<reference key="13">
    <citation type="journal article" date="2015" name="Proteomics">
        <title>N-terminome analysis of the human mitochondrial proteome.</title>
        <authorList>
            <person name="Vaca Jacome A.S."/>
            <person name="Rabilloud T."/>
            <person name="Schaeffer-Reiss C."/>
            <person name="Rompais M."/>
            <person name="Ayoub D."/>
            <person name="Lane L."/>
            <person name="Bairoch A."/>
            <person name="Van Dorsselaer A."/>
            <person name="Carapito C."/>
        </authorList>
    </citation>
    <scope>IDENTIFICATION BY MASS SPECTROMETRY [LARGE SCALE ANALYSIS]</scope>
</reference>
<reference key="14">
    <citation type="journal article" date="2018" name="Sci. Rep.">
        <title>Crystal Structure of Human Nocturnin Catalytic Domain.</title>
        <authorList>
            <person name="Estrella M.A."/>
            <person name="Du J."/>
            <person name="Korennykh A."/>
        </authorList>
    </citation>
    <scope>CATALYTIC ACTIVITY</scope>
    <scope>FUNCTION</scope>
</reference>
<reference evidence="15 16" key="15">
    <citation type="journal article" date="2015" name="J. Biol. Chem.">
        <title>The Role of Phosphodiesterase 12 (PDE12) as a Negative Regulator of the Innate Immune Response and the Discovery of Antiviral Inhibitors.</title>
        <authorList>
            <person name="Wood E.R."/>
            <person name="Bledsoe R."/>
            <person name="Chai J."/>
            <person name="Daka P."/>
            <person name="Deng H."/>
            <person name="Ding Y."/>
            <person name="Harris-Gurley S."/>
            <person name="Kryn L.H."/>
            <person name="Nartey E."/>
            <person name="Nichols J."/>
            <person name="Nolte R.T."/>
            <person name="Prabhu N."/>
            <person name="Rise C."/>
            <person name="Sheahan T."/>
            <person name="Shotwell J.B."/>
            <person name="Smith D."/>
            <person name="Tai V."/>
            <person name="Taylor J.D."/>
            <person name="Tomberlin G."/>
            <person name="Wang L."/>
            <person name="Wisely B."/>
            <person name="You S."/>
            <person name="Xia B."/>
            <person name="Dickson H."/>
        </authorList>
    </citation>
    <scope>X-RAY CRYSTALLOGRAPHY (1.78 ANGSTROMS) OF 155-609 IN COMPLEX WITH MAGNESIUM</scope>
    <scope>FUNCTION</scope>
    <scope>CATALYTIC ACTIVITY</scope>
</reference>
<reference evidence="17" key="16">
    <citation type="submission" date="2015-04" db="PDB data bank">
        <title>Crystal structure of human phosphodiesterase.</title>
        <authorList>
            <person name="Kim S.Y."/>
            <person name="Kohno T."/>
            <person name="Mori T."/>
            <person name="Kitano K."/>
            <person name="Hakoshima T."/>
        </authorList>
    </citation>
    <scope>X-RAY CRYSTALLOGRAPHY (1.82 ANGSTROMS) OF 154-609 IN COMPLEX WITH MAGNESIUM</scope>
</reference>
<proteinExistence type="evidence at protein level"/>
<dbReference type="EC" id="3.1.4.-" evidence="9"/>
<dbReference type="EC" id="3.1.13.4" evidence="7 9 10"/>
<dbReference type="EMBL" id="AB115695">
    <property type="protein sequence ID" value="BAD20938.1"/>
    <property type="molecule type" value="mRNA"/>
</dbReference>
<dbReference type="EMBL" id="AK074423">
    <property type="protein sequence ID" value="BAB85079.1"/>
    <property type="molecule type" value="mRNA"/>
</dbReference>
<dbReference type="EMBL" id="AK300374">
    <property type="protein sequence ID" value="BAG62110.1"/>
    <property type="molecule type" value="mRNA"/>
</dbReference>
<dbReference type="EMBL" id="CH471055">
    <property type="protein sequence ID" value="EAW65342.1"/>
    <property type="molecule type" value="Genomic_DNA"/>
</dbReference>
<dbReference type="EMBL" id="AL831824">
    <property type="protein sequence ID" value="CAD38538.1"/>
    <property type="molecule type" value="mRNA"/>
</dbReference>
<dbReference type="CCDS" id="CCDS33772.1">
    <molecule id="Q6L8Q7-1"/>
</dbReference>
<dbReference type="RefSeq" id="NP_808881.3">
    <molecule id="Q6L8Q7-1"/>
    <property type="nucleotide sequence ID" value="NM_177966.7"/>
</dbReference>
<dbReference type="PDB" id="4Z0V">
    <property type="method" value="X-ray"/>
    <property type="resolution" value="1.78 A"/>
    <property type="chains" value="A=155-609"/>
</dbReference>
<dbReference type="PDB" id="4Z2B">
    <property type="method" value="X-ray"/>
    <property type="resolution" value="1.80 A"/>
    <property type="chains" value="A=155-609"/>
</dbReference>
<dbReference type="PDB" id="4ZKF">
    <property type="method" value="X-ray"/>
    <property type="resolution" value="1.82 A"/>
    <property type="chains" value="A=154-609"/>
</dbReference>
<dbReference type="PDBsum" id="4Z0V"/>
<dbReference type="PDBsum" id="4Z2B"/>
<dbReference type="PDBsum" id="4ZKF"/>
<dbReference type="SMR" id="Q6L8Q7"/>
<dbReference type="BioGRID" id="128397">
    <property type="interactions" value="124"/>
</dbReference>
<dbReference type="FunCoup" id="Q6L8Q7">
    <property type="interactions" value="4141"/>
</dbReference>
<dbReference type="IntAct" id="Q6L8Q7">
    <property type="interactions" value="30"/>
</dbReference>
<dbReference type="MINT" id="Q6L8Q7"/>
<dbReference type="STRING" id="9606.ENSP00000309142"/>
<dbReference type="BindingDB" id="Q6L8Q7"/>
<dbReference type="ChEMBL" id="CHEMBL4523342"/>
<dbReference type="GuidetoPHARMACOLOGY" id="3207"/>
<dbReference type="GlyGen" id="Q6L8Q7">
    <property type="glycosylation" value="1 site, 1 O-linked glycan (1 site)"/>
</dbReference>
<dbReference type="iPTMnet" id="Q6L8Q7"/>
<dbReference type="PhosphoSitePlus" id="Q6L8Q7"/>
<dbReference type="SwissPalm" id="Q6L8Q7"/>
<dbReference type="BioMuta" id="PDE12"/>
<dbReference type="DMDM" id="172046137"/>
<dbReference type="jPOST" id="Q6L8Q7"/>
<dbReference type="MassIVE" id="Q6L8Q7"/>
<dbReference type="PaxDb" id="9606-ENSP00000309142"/>
<dbReference type="PeptideAtlas" id="Q6L8Q7"/>
<dbReference type="ProteomicsDB" id="66555">
    <molecule id="Q6L8Q7-1"/>
</dbReference>
<dbReference type="ProteomicsDB" id="66556">
    <molecule id="Q6L8Q7-2"/>
</dbReference>
<dbReference type="Pumba" id="Q6L8Q7"/>
<dbReference type="Antibodypedia" id="46309">
    <property type="antibodies" value="138 antibodies from 23 providers"/>
</dbReference>
<dbReference type="DNASU" id="201626"/>
<dbReference type="Ensembl" id="ENST00000311180.9">
    <molecule id="Q6L8Q7-1"/>
    <property type="protein sequence ID" value="ENSP00000309142.7"/>
    <property type="gene ID" value="ENSG00000174840.10"/>
</dbReference>
<dbReference type="GeneID" id="201626"/>
<dbReference type="KEGG" id="hsa:201626"/>
<dbReference type="MANE-Select" id="ENST00000311180.9">
    <property type="protein sequence ID" value="ENSP00000309142.7"/>
    <property type="RefSeq nucleotide sequence ID" value="NM_177966.7"/>
    <property type="RefSeq protein sequence ID" value="NP_808881.3"/>
</dbReference>
<dbReference type="UCSC" id="uc003diw.5">
    <molecule id="Q6L8Q7-1"/>
    <property type="organism name" value="human"/>
</dbReference>
<dbReference type="AGR" id="HGNC:25386"/>
<dbReference type="CTD" id="201626"/>
<dbReference type="GeneCards" id="PDE12"/>
<dbReference type="HGNC" id="HGNC:25386">
    <property type="gene designation" value="PDE12"/>
</dbReference>
<dbReference type="HPA" id="ENSG00000174840">
    <property type="expression patterns" value="Low tissue specificity"/>
</dbReference>
<dbReference type="MIM" id="616519">
    <property type="type" value="gene"/>
</dbReference>
<dbReference type="neXtProt" id="NX_Q6L8Q7"/>
<dbReference type="OpenTargets" id="ENSG00000174840"/>
<dbReference type="PharmGKB" id="PA162399016"/>
<dbReference type="VEuPathDB" id="HostDB:ENSG00000174840"/>
<dbReference type="eggNOG" id="KOG0620">
    <property type="taxonomic scope" value="Eukaryota"/>
</dbReference>
<dbReference type="GeneTree" id="ENSGT00940000157205"/>
<dbReference type="HOGENOM" id="CLU_016428_7_2_1"/>
<dbReference type="InParanoid" id="Q6L8Q7"/>
<dbReference type="OMA" id="FRLKSAC"/>
<dbReference type="OrthoDB" id="412787at2759"/>
<dbReference type="PAN-GO" id="Q6L8Q7">
    <property type="GO annotations" value="3 GO annotations based on evolutionary models"/>
</dbReference>
<dbReference type="PhylomeDB" id="Q6L8Q7"/>
<dbReference type="TreeFam" id="TF323175"/>
<dbReference type="PathwayCommons" id="Q6L8Q7"/>
<dbReference type="Reactome" id="R-HSA-8983711">
    <property type="pathway name" value="OAS antiviral response"/>
</dbReference>
<dbReference type="SignaLink" id="Q6L8Q7"/>
<dbReference type="BioGRID-ORCS" id="201626">
    <property type="hits" value="175 hits in 1163 CRISPR screens"/>
</dbReference>
<dbReference type="ChiTaRS" id="PDE12">
    <property type="organism name" value="human"/>
</dbReference>
<dbReference type="EvolutionaryTrace" id="Q6L8Q7"/>
<dbReference type="GenomeRNAi" id="201626"/>
<dbReference type="Pharos" id="Q6L8Q7">
    <property type="development level" value="Tchem"/>
</dbReference>
<dbReference type="PRO" id="PR:Q6L8Q7"/>
<dbReference type="Proteomes" id="UP000005640">
    <property type="component" value="Chromosome 3"/>
</dbReference>
<dbReference type="RNAct" id="Q6L8Q7">
    <property type="molecule type" value="protein"/>
</dbReference>
<dbReference type="Bgee" id="ENSG00000174840">
    <property type="expression patterns" value="Expressed in mucosa of sigmoid colon and 198 other cell types or tissues"/>
</dbReference>
<dbReference type="ExpressionAtlas" id="Q6L8Q7">
    <property type="expression patterns" value="baseline and differential"/>
</dbReference>
<dbReference type="GO" id="GO:0005829">
    <property type="term" value="C:cytosol"/>
    <property type="evidence" value="ECO:0000304"/>
    <property type="project" value="Reactome"/>
</dbReference>
<dbReference type="GO" id="GO:0005759">
    <property type="term" value="C:mitochondrial matrix"/>
    <property type="evidence" value="ECO:0000314"/>
    <property type="project" value="UniProtKB"/>
</dbReference>
<dbReference type="GO" id="GO:0005739">
    <property type="term" value="C:mitochondrion"/>
    <property type="evidence" value="ECO:0006056"/>
    <property type="project" value="FlyBase"/>
</dbReference>
<dbReference type="GO" id="GO:0000175">
    <property type="term" value="F:3'-5'-RNA exonuclease activity"/>
    <property type="evidence" value="ECO:0000315"/>
    <property type="project" value="UniProtKB"/>
</dbReference>
<dbReference type="GO" id="GO:0004527">
    <property type="term" value="F:exonuclease activity"/>
    <property type="evidence" value="ECO:0000314"/>
    <property type="project" value="UniProtKB"/>
</dbReference>
<dbReference type="GO" id="GO:0046872">
    <property type="term" value="F:metal ion binding"/>
    <property type="evidence" value="ECO:0007669"/>
    <property type="project" value="UniProtKB-KW"/>
</dbReference>
<dbReference type="GO" id="GO:0034611">
    <property type="term" value="F:oligoribonucleotidase activity"/>
    <property type="evidence" value="ECO:0000304"/>
    <property type="project" value="Reactome"/>
</dbReference>
<dbReference type="GO" id="GO:0004535">
    <property type="term" value="F:poly(A)-specific ribonuclease activity"/>
    <property type="evidence" value="ECO:0000315"/>
    <property type="project" value="UniProtKB"/>
</dbReference>
<dbReference type="GO" id="GO:0140374">
    <property type="term" value="P:antiviral innate immune response"/>
    <property type="evidence" value="ECO:0000314"/>
    <property type="project" value="UniProtKB"/>
</dbReference>
<dbReference type="GO" id="GO:0071359">
    <property type="term" value="P:cellular response to dsRNA"/>
    <property type="evidence" value="ECO:0000314"/>
    <property type="project" value="UniProtKB"/>
</dbReference>
<dbReference type="GO" id="GO:0035457">
    <property type="term" value="P:cellular response to interferon-alpha"/>
    <property type="evidence" value="ECO:0000315"/>
    <property type="project" value="UniProtKB"/>
</dbReference>
<dbReference type="GO" id="GO:0071346">
    <property type="term" value="P:cellular response to type II interferon"/>
    <property type="evidence" value="ECO:0000314"/>
    <property type="project" value="UniProtKB"/>
</dbReference>
<dbReference type="GO" id="GO:0051607">
    <property type="term" value="P:defense response to virus"/>
    <property type="evidence" value="ECO:0000304"/>
    <property type="project" value="Reactome"/>
</dbReference>
<dbReference type="GO" id="GO:0000958">
    <property type="term" value="P:mitochondrial mRNA catabolic process"/>
    <property type="evidence" value="ECO:0000315"/>
    <property type="project" value="UniProtKB"/>
</dbReference>
<dbReference type="GO" id="GO:0006397">
    <property type="term" value="P:mRNA processing"/>
    <property type="evidence" value="ECO:0007669"/>
    <property type="project" value="UniProtKB-KW"/>
</dbReference>
<dbReference type="GO" id="GO:0000288">
    <property type="term" value="P:nuclear-transcribed mRNA catabolic process, deadenylation-dependent decay"/>
    <property type="evidence" value="ECO:0000315"/>
    <property type="project" value="UniProtKB"/>
</dbReference>
<dbReference type="GO" id="GO:0090304">
    <property type="term" value="P:nucleic acid metabolic process"/>
    <property type="evidence" value="ECO:0000314"/>
    <property type="project" value="UniProtKB"/>
</dbReference>
<dbReference type="GO" id="GO:0045070">
    <property type="term" value="P:positive regulation of viral genome replication"/>
    <property type="evidence" value="ECO:0000315"/>
    <property type="project" value="UniProtKB"/>
</dbReference>
<dbReference type="GO" id="GO:0044528">
    <property type="term" value="P:regulation of mitochondrial mRNA stability"/>
    <property type="evidence" value="ECO:0000315"/>
    <property type="project" value="UniProtKB"/>
</dbReference>
<dbReference type="FunFam" id="3.60.10.10:FF:000018">
    <property type="entry name" value="2',5'-phosphodiesterase 12"/>
    <property type="match status" value="1"/>
</dbReference>
<dbReference type="Gene3D" id="3.60.10.10">
    <property type="entry name" value="Endonuclease/exonuclease/phosphatase"/>
    <property type="match status" value="1"/>
</dbReference>
<dbReference type="InterPro" id="IPR050410">
    <property type="entry name" value="CCR4/nocturin_mRNA_transcr"/>
</dbReference>
<dbReference type="InterPro" id="IPR036691">
    <property type="entry name" value="Endo/exonu/phosph_ase_sf"/>
</dbReference>
<dbReference type="InterPro" id="IPR005135">
    <property type="entry name" value="Endo/exonuclease/phosphatase"/>
</dbReference>
<dbReference type="InterPro" id="IPR048821">
    <property type="entry name" value="PDE12-like_N"/>
</dbReference>
<dbReference type="PANTHER" id="PTHR12121:SF37">
    <property type="entry name" value="2',5'-PHOSPHODIESTERASE 12"/>
    <property type="match status" value="1"/>
</dbReference>
<dbReference type="PANTHER" id="PTHR12121">
    <property type="entry name" value="CARBON CATABOLITE REPRESSOR PROTEIN 4"/>
    <property type="match status" value="1"/>
</dbReference>
<dbReference type="Pfam" id="PF03372">
    <property type="entry name" value="Exo_endo_phos"/>
    <property type="match status" value="1"/>
</dbReference>
<dbReference type="Pfam" id="PF21171">
    <property type="entry name" value="PDE12-like_N"/>
    <property type="match status" value="1"/>
</dbReference>
<dbReference type="SUPFAM" id="SSF56219">
    <property type="entry name" value="DNase I-like"/>
    <property type="match status" value="1"/>
</dbReference>
<comment type="function">
    <text evidence="5 6 7 8 9 10">Enzyme that cleaves 2',5'-phosphodiester bond linking adenosines of the 5'-triphosphorylated oligoadenylates, triphosphorylated oligoadenylates referred as 2-5A modulates the 2-5A system. Degrades triphosphorylated 2-5A to produce AMP and ATP (PubMed:26055709). Also cleaves 3',5'-phosphodiester bond of oligoadenylates (PubMed:21666256, PubMed:26055709, PubMed:30389976). Plays a role as a negative regulator of the 2-5A system that is one of the major pathways for antiviral and antitumor functions induced by interferons (IFNs). Suppression of this enzyme increases cellular 2-5A levels and decreases viral replication in cultured small-airway epithelial cells and Hela cells (PubMed:26055709).</text>
</comment>
<comment type="catalytic activity">
    <reaction evidence="6 7 8 9 10">
        <text>Exonucleolytic cleavage of poly(A) to 5'-AMP.</text>
        <dbReference type="EC" id="3.1.13.4"/>
    </reaction>
</comment>
<comment type="cofactor">
    <cofactor evidence="8 9 11">
        <name>Mg(2+)</name>
        <dbReference type="ChEBI" id="CHEBI:18420"/>
    </cofactor>
</comment>
<comment type="biophysicochemical properties">
    <phDependence>
        <text evidence="8">Optimum pH is 8.0 for 2'-5' oligoadenylate exonuclease activity.</text>
    </phDependence>
</comment>
<comment type="subcellular location">
    <subcellularLocation>
        <location evidence="6 7 8">Mitochondrion matrix</location>
    </subcellularLocation>
</comment>
<comment type="alternative products">
    <event type="alternative splicing"/>
    <isoform>
        <id>Q6L8Q7-1</id>
        <name>1</name>
        <sequence type="displayed"/>
    </isoform>
    <isoform>
        <id>Q6L8Q7-2</id>
        <name>2</name>
        <sequence type="described" ref="VSP_032202 VSP_032203"/>
    </isoform>
</comment>
<comment type="tissue specificity">
    <text evidence="5">Ubiquitous.</text>
</comment>
<comment type="similarity">
    <text evidence="14">Belongs to the CCR4/nocturin family.</text>
</comment>
<feature type="transit peptide" description="Mitochondrion" evidence="2">
    <location>
        <begin position="1"/>
        <end position="42"/>
    </location>
</feature>
<feature type="chain" id="PRO_0000324312" description="2',5'-phosphodiesterase 12">
    <location>
        <begin position="43"/>
        <end position="609"/>
    </location>
</feature>
<feature type="region of interest" description="Disordered" evidence="3">
    <location>
        <begin position="89"/>
        <end position="111"/>
    </location>
</feature>
<feature type="region of interest" description="Disordered" evidence="3">
    <location>
        <begin position="206"/>
        <end position="230"/>
    </location>
</feature>
<feature type="compositionally biased region" description="Basic residues" evidence="3">
    <location>
        <begin position="89"/>
        <end position="99"/>
    </location>
</feature>
<feature type="compositionally biased region" description="Low complexity" evidence="3">
    <location>
        <begin position="100"/>
        <end position="111"/>
    </location>
</feature>
<feature type="compositionally biased region" description="Low complexity" evidence="3">
    <location>
        <begin position="213"/>
        <end position="224"/>
    </location>
</feature>
<feature type="active site" description="Proton donor/acceptor" evidence="1">
    <location>
        <position position="496"/>
    </location>
</feature>
<feature type="binding site" evidence="9 11 15 17">
    <location>
        <position position="351"/>
    </location>
    <ligand>
        <name>Mg(2+)</name>
        <dbReference type="ChEBI" id="CHEBI:18420"/>
        <label>1</label>
    </ligand>
</feature>
<feature type="binding site" evidence="11 17">
    <location>
        <position position="496"/>
    </location>
    <ligand>
        <name>Mg(2+)</name>
        <dbReference type="ChEBI" id="CHEBI:18420"/>
        <label>2</label>
    </ligand>
</feature>
<feature type="binding site" evidence="11 17">
    <location>
        <position position="498"/>
    </location>
    <ligand>
        <name>Mg(2+)</name>
        <dbReference type="ChEBI" id="CHEBI:18420"/>
        <label>2</label>
    </ligand>
</feature>
<feature type="modified residue" description="Phosphoserine" evidence="18 19">
    <location>
        <position position="217"/>
    </location>
</feature>
<feature type="splice variant" id="VSP_032202" description="In isoform 2." evidence="13">
    <original>EERCNMSLT</original>
    <variation>GGFGGNFLL</variation>
    <location>
        <begin position="527"/>
        <end position="535"/>
    </location>
</feature>
<feature type="splice variant" id="VSP_032203" description="In isoform 2." evidence="13">
    <location>
        <begin position="536"/>
        <end position="609"/>
    </location>
</feature>
<feature type="sequence variant" id="VAR_039698" description="In dbSNP:rs2241988." evidence="4 12">
    <original>R</original>
    <variation>W</variation>
    <location>
        <position position="23"/>
    </location>
</feature>
<feature type="strand" evidence="20">
    <location>
        <begin position="163"/>
        <end position="168"/>
    </location>
</feature>
<feature type="strand" evidence="20">
    <location>
        <begin position="182"/>
        <end position="187"/>
    </location>
</feature>
<feature type="helix" evidence="20">
    <location>
        <begin position="190"/>
        <end position="192"/>
    </location>
</feature>
<feature type="strand" evidence="20">
    <location>
        <begin position="193"/>
        <end position="202"/>
    </location>
</feature>
<feature type="helix" evidence="21">
    <location>
        <begin position="214"/>
        <end position="216"/>
    </location>
</feature>
<feature type="strand" evidence="20">
    <location>
        <begin position="223"/>
        <end position="227"/>
    </location>
</feature>
<feature type="strand" evidence="21">
    <location>
        <begin position="232"/>
        <end position="235"/>
    </location>
</feature>
<feature type="helix" evidence="20">
    <location>
        <begin position="239"/>
        <end position="241"/>
    </location>
</feature>
<feature type="strand" evidence="20">
    <location>
        <begin position="246"/>
        <end position="251"/>
    </location>
</feature>
<feature type="strand" evidence="20">
    <location>
        <begin position="262"/>
        <end position="265"/>
    </location>
</feature>
<feature type="helix" evidence="20">
    <location>
        <begin position="279"/>
        <end position="282"/>
    </location>
</feature>
<feature type="helix" evidence="20">
    <location>
        <begin position="283"/>
        <end position="285"/>
    </location>
</feature>
<feature type="strand" evidence="20">
    <location>
        <begin position="294"/>
        <end position="301"/>
    </location>
</feature>
<feature type="helix" evidence="20">
    <location>
        <begin position="305"/>
        <end position="308"/>
    </location>
</feature>
<feature type="helix" evidence="20">
    <location>
        <begin position="311"/>
        <end position="315"/>
    </location>
</feature>
<feature type="helix" evidence="20">
    <location>
        <begin position="323"/>
        <end position="325"/>
    </location>
</feature>
<feature type="helix" evidence="20">
    <location>
        <begin position="328"/>
        <end position="341"/>
    </location>
</feature>
<feature type="strand" evidence="20">
    <location>
        <begin position="345"/>
        <end position="353"/>
    </location>
</feature>
<feature type="helix" evidence="20">
    <location>
        <begin position="354"/>
        <end position="359"/>
    </location>
</feature>
<feature type="helix" evidence="20">
    <location>
        <begin position="361"/>
        <end position="367"/>
    </location>
</feature>
<feature type="strand" evidence="20">
    <location>
        <begin position="370"/>
        <end position="387"/>
    </location>
</feature>
<feature type="turn" evidence="20">
    <location>
        <begin position="388"/>
        <end position="390"/>
    </location>
</feature>
<feature type="strand" evidence="20">
    <location>
        <begin position="391"/>
        <end position="396"/>
    </location>
</feature>
<feature type="helix" evidence="20">
    <location>
        <begin position="401"/>
        <end position="407"/>
    </location>
</feature>
<feature type="helix" evidence="20">
    <location>
        <begin position="409"/>
        <end position="411"/>
    </location>
</feature>
<feature type="helix" evidence="20">
    <location>
        <begin position="412"/>
        <end position="417"/>
    </location>
</feature>
<feature type="turn" evidence="20">
    <location>
        <begin position="418"/>
        <end position="420"/>
    </location>
</feature>
<feature type="helix" evidence="20">
    <location>
        <begin position="422"/>
        <end position="430"/>
    </location>
</feature>
<feature type="strand" evidence="20">
    <location>
        <begin position="434"/>
        <end position="444"/>
    </location>
</feature>
<feature type="strand" evidence="20">
    <location>
        <begin position="449"/>
        <end position="456"/>
    </location>
</feature>
<feature type="helix" evidence="20">
    <location>
        <begin position="464"/>
        <end position="483"/>
    </location>
</feature>
<feature type="strand" evidence="20">
    <location>
        <begin position="486"/>
        <end position="488"/>
    </location>
</feature>
<feature type="strand" evidence="20">
    <location>
        <begin position="491"/>
        <end position="496"/>
    </location>
</feature>
<feature type="helix" evidence="20">
    <location>
        <begin position="504"/>
        <end position="511"/>
    </location>
</feature>
<feature type="strand" evidence="20">
    <location>
        <begin position="512"/>
        <end position="514"/>
    </location>
</feature>
<feature type="helix" evidence="20">
    <location>
        <begin position="519"/>
        <end position="522"/>
    </location>
</feature>
<feature type="strand" evidence="20">
    <location>
        <begin position="540"/>
        <end position="542"/>
    </location>
</feature>
<feature type="strand" evidence="20">
    <location>
        <begin position="550"/>
        <end position="553"/>
    </location>
</feature>
<feature type="strand" evidence="20">
    <location>
        <begin position="556"/>
        <end position="558"/>
    </location>
</feature>
<feature type="strand" evidence="20">
    <location>
        <begin position="561"/>
        <end position="566"/>
    </location>
</feature>
<feature type="turn" evidence="20">
    <location>
        <begin position="567"/>
        <end position="569"/>
    </location>
</feature>
<feature type="strand" evidence="20">
    <location>
        <begin position="570"/>
        <end position="575"/>
    </location>
</feature>
<feature type="helix" evidence="20">
    <location>
        <begin position="581"/>
        <end position="585"/>
    </location>
</feature>
<feature type="strand" evidence="20">
    <location>
        <begin position="588"/>
        <end position="592"/>
    </location>
</feature>
<feature type="strand" evidence="20">
    <location>
        <begin position="595"/>
        <end position="599"/>
    </location>
</feature>
<feature type="strand" evidence="20">
    <location>
        <begin position="602"/>
        <end position="608"/>
    </location>
</feature>
<gene>
    <name type="primary">PDE12</name>
</gene>
<organism>
    <name type="scientific">Homo sapiens</name>
    <name type="common">Human</name>
    <dbReference type="NCBI Taxonomy" id="9606"/>
    <lineage>
        <taxon>Eukaryota</taxon>
        <taxon>Metazoa</taxon>
        <taxon>Chordata</taxon>
        <taxon>Craniata</taxon>
        <taxon>Vertebrata</taxon>
        <taxon>Euteleostomi</taxon>
        <taxon>Mammalia</taxon>
        <taxon>Eutheria</taxon>
        <taxon>Euarchontoglires</taxon>
        <taxon>Primates</taxon>
        <taxon>Haplorrhini</taxon>
        <taxon>Catarrhini</taxon>
        <taxon>Hominidae</taxon>
        <taxon>Homo</taxon>
    </lineage>
</organism>
<keyword id="KW-0002">3D-structure</keyword>
<keyword id="KW-0025">Alternative splicing</keyword>
<keyword id="KW-0269">Exonuclease</keyword>
<keyword id="KW-0378">Hydrolase</keyword>
<keyword id="KW-0460">Magnesium</keyword>
<keyword id="KW-0479">Metal-binding</keyword>
<keyword id="KW-0496">Mitochondrion</keyword>
<keyword id="KW-0507">mRNA processing</keyword>
<keyword id="KW-0540">Nuclease</keyword>
<keyword id="KW-0597">Phosphoprotein</keyword>
<keyword id="KW-1267">Proteomics identification</keyword>
<keyword id="KW-1185">Reference proteome</keyword>
<keyword id="KW-0809">Transit peptide</keyword>
<name>PDE12_HUMAN</name>
<protein>
    <recommendedName>
        <fullName>2',5'-phosphodiesterase 12</fullName>
        <shortName>2'-PDE</shortName>
        <shortName>2-PDE</shortName>
        <ecNumber evidence="9">3.1.4.-</ecNumber>
    </recommendedName>
    <alternativeName>
        <fullName>Mitochondrial deadenylase</fullName>
        <ecNumber evidence="7 9 10">3.1.13.4</ecNumber>
    </alternativeName>
</protein>
<accession>Q6L8Q7</accession>
<accession>B4DTU8</accession>
<accession>Q8IYU3</accession>
<accession>Q8NDU2</accession>
<accession>Q8TE78</accession>
<sequence length="609" mass="67352">MWRLPGARAALRVIRTAVEKLSRAEAGSQTAAGAMERAVVRCVPSEPKLSLSFALADGSHKNMQRDQSEPLGRVLSRIATNALKGHAKAAAAKKSRKSRPNASGGAACSGPGPEPAVFCEPVVKLYYREEAVAEDVLNVDAWQDGAVLQIGDVKYKVERNPPAFTELQLPRYIMAGFPVCPKLSLEFGDPASSLFRWYKEAKPGAAEPEVGVPSSLSPSSPSSSWTETDVEERVYTPSNADIGLRLKLHCTPGDGQRFGHSRELESVCVVEAGPGTCTFDHRHLYTKKVTEDALIRTVSYNILADTYAQTEFSRTVLYPYCAPYALELDYRQNLIQKELTGYNADVICLQEVDRAVFSDSLVPALEAFGLEGVFRIKQHEGLATFYRKSKFSLLSQHDISFYEALESDPLHKELLEKLVLYPSAQEKVLQRSSVLQVSVLQSTKDSSKRICVANTHLYWHPKGGYIRLIQMAVALAHIRHVSCDLYPGIPVIFCGDFNSTPSTGMYHFVINGSIPEDHEDWASNGEEERCNMSLTHFFKLKSACGEPAYTNYVGGFHGCLDYIFIDLNALEVEQVIPLPSHEEVTTHQALPSVSHPSDHIALVCDLKWK</sequence>